<gene>
    <name type="primary">CRYAA</name>
</gene>
<accession>P02497</accession>
<accession>P02490</accession>
<accession>P82532</accession>
<accession>Q61444</accession>
<organism>
    <name type="scientific">Mesocricetus auratus</name>
    <name type="common">Golden hamster</name>
    <dbReference type="NCBI Taxonomy" id="10036"/>
    <lineage>
        <taxon>Eukaryota</taxon>
        <taxon>Metazoa</taxon>
        <taxon>Chordata</taxon>
        <taxon>Craniata</taxon>
        <taxon>Vertebrata</taxon>
        <taxon>Euteleostomi</taxon>
        <taxon>Mammalia</taxon>
        <taxon>Eutheria</taxon>
        <taxon>Euarchontoglires</taxon>
        <taxon>Glires</taxon>
        <taxon>Rodentia</taxon>
        <taxon>Myomorpha</taxon>
        <taxon>Muroidea</taxon>
        <taxon>Cricetidae</taxon>
        <taxon>Cricetinae</taxon>
        <taxon>Mesocricetus</taxon>
    </lineage>
</organism>
<sequence>MDVTIQHPWFKRALGPFYPSRLFDQFFGEGLFEYDLLPFLSSTISPYYRQSLFRTVLDSGISELMTHMWFVMHQPHAGNPKNNPIKVRSDRDKFVIFLDVKHFSPEDLTVKVLEDFVEIHGKHNERQDDHGYISREFHRRYRLPSNVDQSALSCSLSADGMLTFSGPKVQSGLDAGHSERAIPVSREEKPSSAPSS</sequence>
<comment type="function">
    <text evidence="4">Contributes to the transparency and refractive index of the lens (By similarity). Acts as a chaperone, preventing aggregation of various proteins under a wide range of stress conditions (By similarity). Required for the correct formation of lens intermediate filaments as part of a complex composed of BFSP1, BFSP2 and CRYAA (By similarity).</text>
</comment>
<comment type="subunit">
    <text evidence="2 4">Heteromer composed of three CRYAA and one CRYAB subunits. Inter-subunit bridging via zinc ions enhances stability, which is crucial as there is no protein turn over in the lens. Can also form homodimers and homotetramers (dimers of dimers) which serve as the building blocks of homooligomers (By similarity). Within homooligomers, the zinc-binding motif is created from residues of 3 different molecules. His-123 and Glu-125 from one molecule are ligands of the zinc ion, and His-130 and His-177 residues from additional molecules complete the site with tetrahedral coordination geometry (By similarity). Part of a complex required for lens intermediate filament formation composed of BFSP1, BFSP2 and CRYAA (By similarity).</text>
</comment>
<comment type="subcellular location">
    <subcellularLocation>
        <location evidence="4">Cytoplasm</location>
    </subcellularLocation>
    <subcellularLocation>
        <location evidence="4">Nucleus</location>
    </subcellularLocation>
    <text evidence="4">Translocates to the nucleus during heat shock and resides in sub-nuclear structures known as SC35 speckles or nuclear splicing speckles.</text>
</comment>
<comment type="alternative products">
    <event type="alternative splicing"/>
    <isoform>
        <id>P02497-1</id>
        <name>1</name>
        <name>Minor</name>
        <name>Alpha-A(ins)</name>
        <sequence type="displayed"/>
    </isoform>
    <isoform>
        <id>P02497-2</id>
        <name>2</name>
        <name>Major</name>
        <sequence type="described" ref="VSP_011915"/>
    </isoform>
</comment>
<comment type="PTM">
    <text evidence="4">Acetylation at Lys-93 may increase chaperone activity.</text>
</comment>
<comment type="PTM">
    <text evidence="4">Undergoes age-dependent proteolytical cleavage at the C-terminus.</text>
</comment>
<comment type="similarity">
    <text evidence="5">Belongs to the small heat shock protein (HSP20) family.</text>
</comment>
<name>CRYAA_MESAU</name>
<keyword id="KW-0007">Acetylation</keyword>
<keyword id="KW-0025">Alternative splicing</keyword>
<keyword id="KW-0143">Chaperone</keyword>
<keyword id="KW-0963">Cytoplasm</keyword>
<keyword id="KW-0903">Direct protein sequencing</keyword>
<keyword id="KW-0273">Eye lens protein</keyword>
<keyword id="KW-0325">Glycoprotein</keyword>
<keyword id="KW-0479">Metal-binding</keyword>
<keyword id="KW-0488">Methylation</keyword>
<keyword id="KW-0539">Nucleus</keyword>
<keyword id="KW-0597">Phosphoprotein</keyword>
<keyword id="KW-1185">Reference proteome</keyword>
<keyword id="KW-0862">Zinc</keyword>
<feature type="chain" id="PRO_0000125871" description="Alpha-crystallin A chain">
    <location>
        <begin position="1"/>
        <end position="196"/>
    </location>
</feature>
<feature type="domain" description="sHSP" evidence="5">
    <location>
        <begin position="76"/>
        <end position="185"/>
    </location>
</feature>
<feature type="region of interest" description="Required for complex formation with BFSP1 and BFSP2" evidence="4">
    <location>
        <begin position="1"/>
        <end position="63"/>
    </location>
</feature>
<feature type="region of interest" description="Disordered" evidence="6">
    <location>
        <begin position="168"/>
        <end position="196"/>
    </location>
</feature>
<feature type="compositionally biased region" description="Basic and acidic residues" evidence="6">
    <location>
        <begin position="176"/>
        <end position="190"/>
    </location>
</feature>
<feature type="binding site" evidence="2">
    <location>
        <position position="123"/>
    </location>
    <ligand>
        <name>Zn(2+)</name>
        <dbReference type="ChEBI" id="CHEBI:29105"/>
        <label>1</label>
    </ligand>
</feature>
<feature type="binding site" evidence="2">
    <location>
        <position position="125"/>
    </location>
    <ligand>
        <name>Zn(2+)</name>
        <dbReference type="ChEBI" id="CHEBI:29105"/>
        <label>1</label>
    </ligand>
</feature>
<feature type="binding site" evidence="2">
    <location>
        <position position="130"/>
    </location>
    <ligand>
        <name>Zn(2+)</name>
        <dbReference type="ChEBI" id="CHEBI:29105"/>
        <label>2</label>
    </ligand>
</feature>
<feature type="binding site" evidence="2">
    <location>
        <position position="177"/>
    </location>
    <ligand>
        <name>Zn(2+)</name>
        <dbReference type="ChEBI" id="CHEBI:29105"/>
        <label>3</label>
    </ligand>
</feature>
<feature type="modified residue" description="N-acetylmethionine" evidence="3 8">
    <location>
        <position position="1"/>
    </location>
</feature>
<feature type="modified residue" description="Deamidated glutamine; partial" evidence="1">
    <location>
        <position position="6"/>
    </location>
</feature>
<feature type="modified residue" description="Phosphoserine" evidence="4">
    <location>
        <position position="45"/>
    </location>
</feature>
<feature type="modified residue" description="Deamidated glutamine; partial" evidence="1">
    <location>
        <position position="50"/>
    </location>
</feature>
<feature type="modified residue" description="N6-acetyllysine" evidence="4">
    <location>
        <position position="93"/>
    </location>
</feature>
<feature type="modified residue" description="N6-acetyllysine" evidence="4">
    <location>
        <position position="122"/>
    </location>
</feature>
<feature type="modified residue" description="Deamidated asparagine; partial" evidence="1">
    <location>
        <position position="124"/>
    </location>
</feature>
<feature type="modified residue" description="Phosphoserine" evidence="2">
    <location>
        <position position="145"/>
    </location>
</feature>
<feature type="modified residue" description="Deamidated asparagine; partial" evidence="1">
    <location>
        <position position="146"/>
    </location>
</feature>
<feature type="modified residue" description="Deamidated glutamine; partial" evidence="1">
    <location>
        <position position="170"/>
    </location>
</feature>
<feature type="glycosylation site" description="O-linked (GlcNAc) serine" evidence="1">
    <location>
        <position position="185"/>
    </location>
</feature>
<feature type="splice variant" id="VSP_011915" description="In isoform 2." evidence="7">
    <location>
        <begin position="64"/>
        <end position="86"/>
    </location>
</feature>
<evidence type="ECO:0000250" key="1"/>
<evidence type="ECO:0000250" key="2">
    <source>
        <dbReference type="UniProtKB" id="P02470"/>
    </source>
</evidence>
<evidence type="ECO:0000250" key="3">
    <source>
        <dbReference type="UniProtKB" id="P02474"/>
    </source>
</evidence>
<evidence type="ECO:0000250" key="4">
    <source>
        <dbReference type="UniProtKB" id="P02489"/>
    </source>
</evidence>
<evidence type="ECO:0000255" key="5">
    <source>
        <dbReference type="PROSITE-ProRule" id="PRU00285"/>
    </source>
</evidence>
<evidence type="ECO:0000256" key="6">
    <source>
        <dbReference type="SAM" id="MobiDB-lite"/>
    </source>
</evidence>
<evidence type="ECO:0000303" key="7">
    <source ref="1"/>
</evidence>
<evidence type="ECO:0000305" key="8"/>
<dbReference type="EMBL" id="X02950">
    <property type="protein sequence ID" value="CAA26696.1"/>
    <property type="molecule type" value="Genomic_DNA"/>
</dbReference>
<dbReference type="EMBL" id="X02951">
    <property type="protein sequence ID" value="CAA26697.1"/>
    <property type="molecule type" value="Genomic_DNA"/>
</dbReference>
<dbReference type="PIR" id="A02900">
    <property type="entry name" value="CYHYAM"/>
</dbReference>
<dbReference type="PIR" id="D94432">
    <property type="entry name" value="CYHYA"/>
</dbReference>
<dbReference type="PIR" id="I48183">
    <property type="entry name" value="I48183"/>
</dbReference>
<dbReference type="RefSeq" id="XP_005070744.1">
    <property type="nucleotide sequence ID" value="XM_005070687.2"/>
</dbReference>
<dbReference type="SMR" id="P02497"/>
<dbReference type="STRING" id="10036.ENSMAUP00000018573"/>
<dbReference type="GlyCosmos" id="P02497">
    <property type="glycosylation" value="1 site, No reported glycans"/>
</dbReference>
<dbReference type="Ensembl" id="ENSMAUT00000022534">
    <molecule id="P02497-1"/>
    <property type="protein sequence ID" value="ENSMAUP00000018573"/>
    <property type="gene ID" value="ENSMAUG00000017095"/>
</dbReference>
<dbReference type="eggNOG" id="KOG3591">
    <property type="taxonomic scope" value="Eukaryota"/>
</dbReference>
<dbReference type="Proteomes" id="UP000189706">
    <property type="component" value="Unplaced"/>
</dbReference>
<dbReference type="GO" id="GO:0005737">
    <property type="term" value="C:cytoplasm"/>
    <property type="evidence" value="ECO:0000250"/>
    <property type="project" value="UniProtKB"/>
</dbReference>
<dbReference type="GO" id="GO:0005829">
    <property type="term" value="C:cytosol"/>
    <property type="evidence" value="ECO:0007669"/>
    <property type="project" value="Ensembl"/>
</dbReference>
<dbReference type="GO" id="GO:0005654">
    <property type="term" value="C:nucleoplasm"/>
    <property type="evidence" value="ECO:0007669"/>
    <property type="project" value="Ensembl"/>
</dbReference>
<dbReference type="GO" id="GO:0005634">
    <property type="term" value="C:nucleus"/>
    <property type="evidence" value="ECO:0000250"/>
    <property type="project" value="UniProtKB"/>
</dbReference>
<dbReference type="GO" id="GO:0032991">
    <property type="term" value="C:protein-containing complex"/>
    <property type="evidence" value="ECO:0007669"/>
    <property type="project" value="Ensembl"/>
</dbReference>
<dbReference type="GO" id="GO:0042802">
    <property type="term" value="F:identical protein binding"/>
    <property type="evidence" value="ECO:0007669"/>
    <property type="project" value="Ensembl"/>
</dbReference>
<dbReference type="GO" id="GO:0046872">
    <property type="term" value="F:metal ion binding"/>
    <property type="evidence" value="ECO:0007669"/>
    <property type="project" value="UniProtKB-KW"/>
</dbReference>
<dbReference type="GO" id="GO:0005212">
    <property type="term" value="F:structural constituent of eye lens"/>
    <property type="evidence" value="ECO:0007669"/>
    <property type="project" value="UniProtKB-KW"/>
</dbReference>
<dbReference type="GO" id="GO:0051082">
    <property type="term" value="F:unfolded protein binding"/>
    <property type="evidence" value="ECO:0007669"/>
    <property type="project" value="Ensembl"/>
</dbReference>
<dbReference type="GO" id="GO:0007015">
    <property type="term" value="P:actin filament organization"/>
    <property type="evidence" value="ECO:0007669"/>
    <property type="project" value="Ensembl"/>
</dbReference>
<dbReference type="GO" id="GO:0060561">
    <property type="term" value="P:apoptotic process involved in morphogenesis"/>
    <property type="evidence" value="ECO:0007669"/>
    <property type="project" value="Ensembl"/>
</dbReference>
<dbReference type="GO" id="GO:0048596">
    <property type="term" value="P:embryonic camera-type eye morphogenesis"/>
    <property type="evidence" value="ECO:0007669"/>
    <property type="project" value="Ensembl"/>
</dbReference>
<dbReference type="GO" id="GO:0070309">
    <property type="term" value="P:lens fiber cell morphogenesis"/>
    <property type="evidence" value="ECO:0007669"/>
    <property type="project" value="Ensembl"/>
</dbReference>
<dbReference type="GO" id="GO:0007017">
    <property type="term" value="P:microtubule-based process"/>
    <property type="evidence" value="ECO:0007669"/>
    <property type="project" value="Ensembl"/>
</dbReference>
<dbReference type="GO" id="GO:0007005">
    <property type="term" value="P:mitochondrion organization"/>
    <property type="evidence" value="ECO:0007669"/>
    <property type="project" value="Ensembl"/>
</dbReference>
<dbReference type="GO" id="GO:0043066">
    <property type="term" value="P:negative regulation of apoptotic process"/>
    <property type="evidence" value="ECO:0007669"/>
    <property type="project" value="Ensembl"/>
</dbReference>
<dbReference type="GO" id="GO:0010629">
    <property type="term" value="P:negative regulation of gene expression"/>
    <property type="evidence" value="ECO:0007669"/>
    <property type="project" value="Ensembl"/>
</dbReference>
<dbReference type="GO" id="GO:0032387">
    <property type="term" value="P:negative regulation of intracellular transport"/>
    <property type="evidence" value="ECO:0007669"/>
    <property type="project" value="Ensembl"/>
</dbReference>
<dbReference type="GO" id="GO:0030307">
    <property type="term" value="P:positive regulation of cell growth"/>
    <property type="evidence" value="ECO:0007669"/>
    <property type="project" value="Ensembl"/>
</dbReference>
<dbReference type="GO" id="GO:0042026">
    <property type="term" value="P:protein refolding"/>
    <property type="evidence" value="ECO:0007669"/>
    <property type="project" value="TreeGrafter"/>
</dbReference>
<dbReference type="GO" id="GO:0050821">
    <property type="term" value="P:protein stabilization"/>
    <property type="evidence" value="ECO:0007669"/>
    <property type="project" value="Ensembl"/>
</dbReference>
<dbReference type="GO" id="GO:0009408">
    <property type="term" value="P:response to heat"/>
    <property type="evidence" value="ECO:0007669"/>
    <property type="project" value="TreeGrafter"/>
</dbReference>
<dbReference type="GO" id="GO:0042542">
    <property type="term" value="P:response to hydrogen peroxide"/>
    <property type="evidence" value="ECO:0007669"/>
    <property type="project" value="Ensembl"/>
</dbReference>
<dbReference type="GO" id="GO:0001666">
    <property type="term" value="P:response to hypoxia"/>
    <property type="evidence" value="ECO:0007669"/>
    <property type="project" value="Ensembl"/>
</dbReference>
<dbReference type="GO" id="GO:0070141">
    <property type="term" value="P:response to UV-A"/>
    <property type="evidence" value="ECO:0007669"/>
    <property type="project" value="Ensembl"/>
</dbReference>
<dbReference type="GO" id="GO:0007021">
    <property type="term" value="P:tubulin complex assembly"/>
    <property type="evidence" value="ECO:0007669"/>
    <property type="project" value="Ensembl"/>
</dbReference>
<dbReference type="GO" id="GO:0007601">
    <property type="term" value="P:visual perception"/>
    <property type="evidence" value="ECO:0007669"/>
    <property type="project" value="Ensembl"/>
</dbReference>
<dbReference type="FunFam" id="2.60.40.790:FF:000008">
    <property type="entry name" value="Alpha-crystallin A chain"/>
    <property type="match status" value="1"/>
</dbReference>
<dbReference type="Gene3D" id="2.60.40.790">
    <property type="match status" value="1"/>
</dbReference>
<dbReference type="InterPro" id="IPR002068">
    <property type="entry name" value="A-crystallin/Hsp20_dom"/>
</dbReference>
<dbReference type="InterPro" id="IPR001436">
    <property type="entry name" value="Alpha-crystallin/sHSP_animal"/>
</dbReference>
<dbReference type="InterPro" id="IPR003090">
    <property type="entry name" value="Alpha-crystallin_N"/>
</dbReference>
<dbReference type="InterPro" id="IPR008978">
    <property type="entry name" value="HSP20-like_chaperone"/>
</dbReference>
<dbReference type="PANTHER" id="PTHR45640:SF14">
    <property type="entry name" value="ALPHA-CRYSTALLIN A CHAIN"/>
    <property type="match status" value="1"/>
</dbReference>
<dbReference type="PANTHER" id="PTHR45640">
    <property type="entry name" value="HEAT SHOCK PROTEIN HSP-12.2-RELATED"/>
    <property type="match status" value="1"/>
</dbReference>
<dbReference type="Pfam" id="PF00525">
    <property type="entry name" value="Crystallin"/>
    <property type="match status" value="1"/>
</dbReference>
<dbReference type="Pfam" id="PF00011">
    <property type="entry name" value="HSP20"/>
    <property type="match status" value="1"/>
</dbReference>
<dbReference type="PRINTS" id="PR00299">
    <property type="entry name" value="ACRYSTALLIN"/>
</dbReference>
<dbReference type="SUPFAM" id="SSF49764">
    <property type="entry name" value="HSP20-like chaperones"/>
    <property type="match status" value="1"/>
</dbReference>
<dbReference type="PROSITE" id="PS01031">
    <property type="entry name" value="SHSP"/>
    <property type="match status" value="1"/>
</dbReference>
<proteinExistence type="evidence at protein level"/>
<reference key="1">
    <citation type="book" date="1980" name="Protides of the biological fluids, Proc. 28th colloquium">
        <title>Trends in the molecular evolution of alpha-crystallin.</title>
        <editorList>
            <person name="Peeters H."/>
        </editorList>
        <authorList>
            <person name="de Jong W.W."/>
            <person name="Zweers A."/>
            <person name="Goodman M."/>
        </authorList>
    </citation>
    <scope>PROTEIN SEQUENCE (ISOFORM 2)</scope>
</reference>
<reference key="2">
    <citation type="journal article" date="1985" name="J. Mol. Biol.">
        <title>Complete structure of the hamster alpha A crystallin gene. Reflection of an evolutionary history by means of exon shuffling.</title>
        <authorList>
            <person name="van den Heuvel R."/>
            <person name="Hendriks W."/>
            <person name="Quax W.J."/>
            <person name="Bloemendal H."/>
        </authorList>
    </citation>
    <scope>NUCLEOTIDE SEQUENCE [GENOMIC DNA] (ISOFORMS 1 AND 2)</scope>
</reference>
<reference key="3">
    <citation type="journal article" date="1980" name="Biochem. Biophys. Res. Commun.">
        <title>Internally elongated rodent alpha-crystallin A chain: resulting from incomplete RNA splicing?</title>
        <authorList>
            <person name="de Jong W.W."/>
            <person name="Cohen L.H."/>
            <person name="Leunissen J.A.M."/>
            <person name="Zweers A."/>
        </authorList>
    </citation>
    <scope>PRELIMINARY PROTEIN SEQUENCE (ISOFORM 1)</scope>
</reference>
<protein>
    <recommendedName>
        <fullName>Alpha-crystallin A chain</fullName>
    </recommendedName>
</protein>